<keyword id="KW-0106">Calcium</keyword>
<keyword id="KW-0445">Lipid transport</keyword>
<keyword id="KW-0446">Lipid-binding</keyword>
<keyword id="KW-0472">Membrane</keyword>
<keyword id="KW-0479">Metal-binding</keyword>
<keyword id="KW-1185">Reference proteome</keyword>
<keyword id="KW-0677">Repeat</keyword>
<keyword id="KW-0812">Transmembrane</keyword>
<keyword id="KW-1133">Transmembrane helix</keyword>
<keyword id="KW-0813">Transport</keyword>
<proteinExistence type="evidence at transcript level"/>
<organism>
    <name type="scientific">Arabidopsis thaliana</name>
    <name type="common">Mouse-ear cress</name>
    <dbReference type="NCBI Taxonomy" id="3702"/>
    <lineage>
        <taxon>Eukaryota</taxon>
        <taxon>Viridiplantae</taxon>
        <taxon>Streptophyta</taxon>
        <taxon>Embryophyta</taxon>
        <taxon>Tracheophyta</taxon>
        <taxon>Spermatophyta</taxon>
        <taxon>Magnoliopsida</taxon>
        <taxon>eudicotyledons</taxon>
        <taxon>Gunneridae</taxon>
        <taxon>Pentapetalae</taxon>
        <taxon>rosids</taxon>
        <taxon>malvids</taxon>
        <taxon>Brassicales</taxon>
        <taxon>Brassicaceae</taxon>
        <taxon>Camelineae</taxon>
        <taxon>Arabidopsis</taxon>
    </lineage>
</organism>
<reference key="1">
    <citation type="journal article" date="2007" name="BMC Genomics">
        <title>Evolutionary genomics of plant genes encoding N-terminal-TM-C2 domain proteins and the similar FAM62 genes and synaptotagmin genes of metazoans.</title>
        <authorList>
            <person name="Craxton M."/>
        </authorList>
    </citation>
    <scope>NUCLEOTIDE SEQUENCE [MRNA]</scope>
</reference>
<reference key="2">
    <citation type="journal article" date="2000" name="Nature">
        <title>Sequence and analysis of chromosome 5 of the plant Arabidopsis thaliana.</title>
        <authorList>
            <person name="Tabata S."/>
            <person name="Kaneko T."/>
            <person name="Nakamura Y."/>
            <person name="Kotani H."/>
            <person name="Kato T."/>
            <person name="Asamizu E."/>
            <person name="Miyajima N."/>
            <person name="Sasamoto S."/>
            <person name="Kimura T."/>
            <person name="Hosouchi T."/>
            <person name="Kawashima K."/>
            <person name="Kohara M."/>
            <person name="Matsumoto M."/>
            <person name="Matsuno A."/>
            <person name="Muraki A."/>
            <person name="Nakayama S."/>
            <person name="Nakazaki N."/>
            <person name="Naruo K."/>
            <person name="Okumura S."/>
            <person name="Shinpo S."/>
            <person name="Takeuchi C."/>
            <person name="Wada T."/>
            <person name="Watanabe A."/>
            <person name="Yamada M."/>
            <person name="Yasuda M."/>
            <person name="Sato S."/>
            <person name="de la Bastide M."/>
            <person name="Huang E."/>
            <person name="Spiegel L."/>
            <person name="Gnoj L."/>
            <person name="O'Shaughnessy A."/>
            <person name="Preston R."/>
            <person name="Habermann K."/>
            <person name="Murray J."/>
            <person name="Johnson D."/>
            <person name="Rohlfing T."/>
            <person name="Nelson J."/>
            <person name="Stoneking T."/>
            <person name="Pepin K."/>
            <person name="Spieth J."/>
            <person name="Sekhon M."/>
            <person name="Armstrong J."/>
            <person name="Becker M."/>
            <person name="Belter E."/>
            <person name="Cordum H."/>
            <person name="Cordes M."/>
            <person name="Courtney L."/>
            <person name="Courtney W."/>
            <person name="Dante M."/>
            <person name="Du H."/>
            <person name="Edwards J."/>
            <person name="Fryman J."/>
            <person name="Haakensen B."/>
            <person name="Lamar E."/>
            <person name="Latreille P."/>
            <person name="Leonard S."/>
            <person name="Meyer R."/>
            <person name="Mulvaney E."/>
            <person name="Ozersky P."/>
            <person name="Riley A."/>
            <person name="Strowmatt C."/>
            <person name="Wagner-McPherson C."/>
            <person name="Wollam A."/>
            <person name="Yoakum M."/>
            <person name="Bell M."/>
            <person name="Dedhia N."/>
            <person name="Parnell L."/>
            <person name="Shah R."/>
            <person name="Rodriguez M."/>
            <person name="Hoon See L."/>
            <person name="Vil D."/>
            <person name="Baker J."/>
            <person name="Kirchoff K."/>
            <person name="Toth K."/>
            <person name="King L."/>
            <person name="Bahret A."/>
            <person name="Miller B."/>
            <person name="Marra M.A."/>
            <person name="Martienssen R."/>
            <person name="McCombie W.R."/>
            <person name="Wilson R.K."/>
            <person name="Murphy G."/>
            <person name="Bancroft I."/>
            <person name="Volckaert G."/>
            <person name="Wambutt R."/>
            <person name="Duesterhoeft A."/>
            <person name="Stiekema W."/>
            <person name="Pohl T."/>
            <person name="Entian K.-D."/>
            <person name="Terryn N."/>
            <person name="Hartley N."/>
            <person name="Bent E."/>
            <person name="Johnson S."/>
            <person name="Langham S.-A."/>
            <person name="McCullagh B."/>
            <person name="Robben J."/>
            <person name="Grymonprez B."/>
            <person name="Zimmermann W."/>
            <person name="Ramsperger U."/>
            <person name="Wedler H."/>
            <person name="Balke K."/>
            <person name="Wedler E."/>
            <person name="Peters S."/>
            <person name="van Staveren M."/>
            <person name="Dirkse W."/>
            <person name="Mooijman P."/>
            <person name="Klein Lankhorst R."/>
            <person name="Weitzenegger T."/>
            <person name="Bothe G."/>
            <person name="Rose M."/>
            <person name="Hauf J."/>
            <person name="Berneiser S."/>
            <person name="Hempel S."/>
            <person name="Feldpausch M."/>
            <person name="Lamberth S."/>
            <person name="Villarroel R."/>
            <person name="Gielen J."/>
            <person name="Ardiles W."/>
            <person name="Bents O."/>
            <person name="Lemcke K."/>
            <person name="Kolesov G."/>
            <person name="Mayer K.F.X."/>
            <person name="Rudd S."/>
            <person name="Schoof H."/>
            <person name="Schueller C."/>
            <person name="Zaccaria P."/>
            <person name="Mewes H.-W."/>
            <person name="Bevan M."/>
            <person name="Fransz P.F."/>
        </authorList>
    </citation>
    <scope>NUCLEOTIDE SEQUENCE [LARGE SCALE GENOMIC DNA]</scope>
    <source>
        <strain>cv. Columbia</strain>
    </source>
</reference>
<reference key="3">
    <citation type="journal article" date="2017" name="Plant J.">
        <title>Araport11: a complete reannotation of the Arabidopsis thaliana reference genome.</title>
        <authorList>
            <person name="Cheng C.Y."/>
            <person name="Krishnakumar V."/>
            <person name="Chan A.P."/>
            <person name="Thibaud-Nissen F."/>
            <person name="Schobel S."/>
            <person name="Town C.D."/>
        </authorList>
    </citation>
    <scope>GENOME REANNOTATION</scope>
    <source>
        <strain>cv. Columbia</strain>
    </source>
</reference>
<name>SYT4_ARATH</name>
<protein>
    <recommendedName>
        <fullName>Synaptotagmin-4</fullName>
    </recommendedName>
    <alternativeName>
        <fullName>NTMC2T2.2</fullName>
    </alternativeName>
    <alternativeName>
        <fullName>Synaptotagmin D</fullName>
    </alternativeName>
</protein>
<sequence>MGFLFGLFIGIAVSFGLVVAFARYSSVRSTRRADLAKTIAAFARMTVQDSRKLLPGDFYPSWVVFSQRQKLNWLNLELEKIWPYVNEAASELIKSSVEPVLEQYTPAMLASLKFSKFTLGTVAPQFTGVSILESESGPNGITMELEMQWDGNPKIVLDVKTLLGVSLPIEVKNIGFTGVFRLIFKPLVDEFPCFGALSYSLREKKGLDFTLKVIGGELTSIPGISDAIEETIRDAIEDSITWPVRKIIPILPGDYSDLELKPVGKLDVKVVQAKDLANKDMIGKSDPYAIVFIRPLPDRTKKTKTISNSLNPIWNEHFEFIVEDVSTQHLTVRVFDDEGVGSSQLIGAAQVPLNELVPGKVKDIWLKLVKDLEIQRDTKNRGQVQLELLYCPLGKEGGLKNPFNPDYSLTILEKVLKPESEDSDATDMKKLVTSKKKDVIVRGVLSVTVVAAEDLPAVDFMGKADAFVVITLKKSETKSKTRVVPDSLNPVWNQTFDFVVEDALHDLLTLEVWDHDKFGKDKIGRVIMTLTRVMLEGEFQEWFELDGAKSGKLCVHLKWTPRLKLRDAS</sequence>
<accession>A0JJX5</accession>
<accession>Q9FY55</accession>
<feature type="chain" id="PRO_0000419241" description="Synaptotagmin-4">
    <location>
        <begin position="1"/>
        <end position="569"/>
    </location>
</feature>
<feature type="transmembrane region" description="Helical" evidence="2">
    <location>
        <begin position="1"/>
        <end position="21"/>
    </location>
</feature>
<feature type="domain" description="SMP-LTD" evidence="4">
    <location>
        <begin position="67"/>
        <end position="251"/>
    </location>
</feature>
<feature type="domain" description="C2 1" evidence="3">
    <location>
        <begin position="245"/>
        <end position="366"/>
    </location>
</feature>
<feature type="domain" description="C2 2" evidence="3">
    <location>
        <begin position="426"/>
        <end position="543"/>
    </location>
</feature>
<feature type="region of interest" description="Phospholipid binding" evidence="1">
    <location>
        <begin position="229"/>
        <end position="531"/>
    </location>
</feature>
<feature type="binding site" evidence="3">
    <location>
        <position position="459"/>
    </location>
    <ligand>
        <name>Ca(2+)</name>
        <dbReference type="ChEBI" id="CHEBI:29108"/>
        <label>1</label>
    </ligand>
</feature>
<feature type="binding site" evidence="3">
    <location>
        <position position="459"/>
    </location>
    <ligand>
        <name>Ca(2+)</name>
        <dbReference type="ChEBI" id="CHEBI:29108"/>
        <label>2</label>
    </ligand>
</feature>
<feature type="binding site" evidence="3">
    <location>
        <position position="465"/>
    </location>
    <ligand>
        <name>Ca(2+)</name>
        <dbReference type="ChEBI" id="CHEBI:29108"/>
        <label>1</label>
    </ligand>
</feature>
<feature type="binding site" evidence="3">
    <location>
        <position position="514"/>
    </location>
    <ligand>
        <name>Ca(2+)</name>
        <dbReference type="ChEBI" id="CHEBI:29108"/>
        <label>1</label>
    </ligand>
</feature>
<feature type="binding site" evidence="3">
    <location>
        <position position="514"/>
    </location>
    <ligand>
        <name>Ca(2+)</name>
        <dbReference type="ChEBI" id="CHEBI:29108"/>
        <label>2</label>
    </ligand>
</feature>
<feature type="binding site" evidence="3">
    <location>
        <position position="516"/>
    </location>
    <ligand>
        <name>Ca(2+)</name>
        <dbReference type="ChEBI" id="CHEBI:29108"/>
        <label>1</label>
    </ligand>
</feature>
<feature type="binding site" evidence="3">
    <location>
        <position position="516"/>
    </location>
    <ligand>
        <name>Ca(2+)</name>
        <dbReference type="ChEBI" id="CHEBI:29108"/>
        <label>2</label>
    </ligand>
</feature>
<feature type="binding site" evidence="3">
    <location>
        <position position="521"/>
    </location>
    <ligand>
        <name>Ca(2+)</name>
        <dbReference type="ChEBI" id="CHEBI:29108"/>
        <label>2</label>
    </ligand>
</feature>
<gene>
    <name type="primary">SYT4</name>
    <name type="synonym">SYTD</name>
    <name type="ordered locus">At5g11100</name>
    <name type="ORF">T5K6.90</name>
</gene>
<comment type="function">
    <text evidence="1">May be involved in membrane trafficking.</text>
</comment>
<comment type="cofactor">
    <cofactor evidence="3">
        <name>Ca(2+)</name>
        <dbReference type="ChEBI" id="CHEBI:29108"/>
    </cofactor>
</comment>
<comment type="subcellular location">
    <subcellularLocation>
        <location evidence="1">Membrane</location>
        <topology evidence="1">Single-pass membrane protein</topology>
    </subcellularLocation>
</comment>
<comment type="similarity">
    <text evidence="5">Belongs to the synaptotagmin family.</text>
</comment>
<comment type="sequence caution" evidence="5">
    <conflict type="erroneous gene model prediction">
        <sequence resource="EMBL-CDS" id="CAC03458"/>
    </conflict>
</comment>
<evidence type="ECO:0000250" key="1"/>
<evidence type="ECO:0000255" key="2"/>
<evidence type="ECO:0000255" key="3">
    <source>
        <dbReference type="PROSITE-ProRule" id="PRU00041"/>
    </source>
</evidence>
<evidence type="ECO:0000255" key="4">
    <source>
        <dbReference type="PROSITE-ProRule" id="PRU01194"/>
    </source>
</evidence>
<evidence type="ECO:0000305" key="5"/>
<dbReference type="EMBL" id="AM410051">
    <property type="protein sequence ID" value="CAL64988.1"/>
    <property type="molecule type" value="mRNA"/>
</dbReference>
<dbReference type="EMBL" id="AL391222">
    <property type="protein sequence ID" value="CAC03458.1"/>
    <property type="status" value="ALT_SEQ"/>
    <property type="molecule type" value="Genomic_DNA"/>
</dbReference>
<dbReference type="EMBL" id="CP002688">
    <property type="protein sequence ID" value="AED91635.1"/>
    <property type="molecule type" value="Genomic_DNA"/>
</dbReference>
<dbReference type="PIR" id="T51799">
    <property type="entry name" value="T51799"/>
</dbReference>
<dbReference type="RefSeq" id="NP_196671.2">
    <property type="nucleotide sequence ID" value="NM_121148.3"/>
</dbReference>
<dbReference type="SMR" id="A0JJX5"/>
<dbReference type="FunCoup" id="A0JJX5">
    <property type="interactions" value="1492"/>
</dbReference>
<dbReference type="IntAct" id="A0JJX5">
    <property type="interactions" value="1"/>
</dbReference>
<dbReference type="STRING" id="3702.A0JJX5"/>
<dbReference type="PaxDb" id="3702-AT5G11100.1"/>
<dbReference type="ProteomicsDB" id="234179"/>
<dbReference type="GeneID" id="830978"/>
<dbReference type="KEGG" id="ath:AT5G11100"/>
<dbReference type="Araport" id="AT5G11100"/>
<dbReference type="TAIR" id="AT5G11100"/>
<dbReference type="eggNOG" id="KOG1012">
    <property type="taxonomic scope" value="Eukaryota"/>
</dbReference>
<dbReference type="HOGENOM" id="CLU_479515_0_0_1"/>
<dbReference type="InParanoid" id="A0JJX5"/>
<dbReference type="PhylomeDB" id="A0JJX5"/>
<dbReference type="PRO" id="PR:A0JJX5"/>
<dbReference type="Proteomes" id="UP000006548">
    <property type="component" value="Chromosome 5"/>
</dbReference>
<dbReference type="ExpressionAtlas" id="A0JJX5">
    <property type="expression patterns" value="baseline and differential"/>
</dbReference>
<dbReference type="GO" id="GO:0005737">
    <property type="term" value="C:cytoplasm"/>
    <property type="evidence" value="ECO:0007669"/>
    <property type="project" value="UniProtKB-ARBA"/>
</dbReference>
<dbReference type="GO" id="GO:0012505">
    <property type="term" value="C:endomembrane system"/>
    <property type="evidence" value="ECO:0007669"/>
    <property type="project" value="UniProtKB-ARBA"/>
</dbReference>
<dbReference type="GO" id="GO:0016020">
    <property type="term" value="C:membrane"/>
    <property type="evidence" value="ECO:0007669"/>
    <property type="project" value="UniProtKB-SubCell"/>
</dbReference>
<dbReference type="GO" id="GO:0008289">
    <property type="term" value="F:lipid binding"/>
    <property type="evidence" value="ECO:0007669"/>
    <property type="project" value="UniProtKB-KW"/>
</dbReference>
<dbReference type="GO" id="GO:0046872">
    <property type="term" value="F:metal ion binding"/>
    <property type="evidence" value="ECO:0007669"/>
    <property type="project" value="UniProtKB-KW"/>
</dbReference>
<dbReference type="GO" id="GO:0006869">
    <property type="term" value="P:lipid transport"/>
    <property type="evidence" value="ECO:0007669"/>
    <property type="project" value="UniProtKB-KW"/>
</dbReference>
<dbReference type="CDD" id="cd00030">
    <property type="entry name" value="C2"/>
    <property type="match status" value="2"/>
</dbReference>
<dbReference type="CDD" id="cd21677">
    <property type="entry name" value="SMP_SYT"/>
    <property type="match status" value="1"/>
</dbReference>
<dbReference type="FunFam" id="2.60.40.150:FF:000100">
    <property type="entry name" value="Extended synaptotagmin-2"/>
    <property type="match status" value="1"/>
</dbReference>
<dbReference type="FunFam" id="2.60.40.150:FF:000135">
    <property type="entry name" value="Plant synaptotagmin"/>
    <property type="match status" value="1"/>
</dbReference>
<dbReference type="Gene3D" id="2.60.40.150">
    <property type="entry name" value="C2 domain"/>
    <property type="match status" value="2"/>
</dbReference>
<dbReference type="InterPro" id="IPR000008">
    <property type="entry name" value="C2_dom"/>
</dbReference>
<dbReference type="InterPro" id="IPR035892">
    <property type="entry name" value="C2_domain_sf"/>
</dbReference>
<dbReference type="InterPro" id="IPR031468">
    <property type="entry name" value="SMP_LBD"/>
</dbReference>
<dbReference type="InterPro" id="IPR045050">
    <property type="entry name" value="Synaptotagmin_plant"/>
</dbReference>
<dbReference type="InterPro" id="IPR039010">
    <property type="entry name" value="Synaptotagmin_SMP"/>
</dbReference>
<dbReference type="PANTHER" id="PTHR10774">
    <property type="entry name" value="EXTENDED SYNAPTOTAGMIN-RELATED"/>
    <property type="match status" value="1"/>
</dbReference>
<dbReference type="PANTHER" id="PTHR10774:SF178">
    <property type="entry name" value="SYNAPTOTAGMIN-4"/>
    <property type="match status" value="1"/>
</dbReference>
<dbReference type="Pfam" id="PF00168">
    <property type="entry name" value="C2"/>
    <property type="match status" value="2"/>
</dbReference>
<dbReference type="Pfam" id="PF17047">
    <property type="entry name" value="SMP_LBD"/>
    <property type="match status" value="1"/>
</dbReference>
<dbReference type="SMART" id="SM00239">
    <property type="entry name" value="C2"/>
    <property type="match status" value="2"/>
</dbReference>
<dbReference type="SUPFAM" id="SSF49562">
    <property type="entry name" value="C2 domain (Calcium/lipid-binding domain, CaLB)"/>
    <property type="match status" value="2"/>
</dbReference>
<dbReference type="PROSITE" id="PS50004">
    <property type="entry name" value="C2"/>
    <property type="match status" value="2"/>
</dbReference>
<dbReference type="PROSITE" id="PS51847">
    <property type="entry name" value="SMP"/>
    <property type="match status" value="1"/>
</dbReference>